<proteinExistence type="evidence at transcript level"/>
<organism>
    <name type="scientific">Bos taurus</name>
    <name type="common">Bovine</name>
    <dbReference type="NCBI Taxonomy" id="9913"/>
    <lineage>
        <taxon>Eukaryota</taxon>
        <taxon>Metazoa</taxon>
        <taxon>Chordata</taxon>
        <taxon>Craniata</taxon>
        <taxon>Vertebrata</taxon>
        <taxon>Euteleostomi</taxon>
        <taxon>Mammalia</taxon>
        <taxon>Eutheria</taxon>
        <taxon>Laurasiatheria</taxon>
        <taxon>Artiodactyla</taxon>
        <taxon>Ruminantia</taxon>
        <taxon>Pecora</taxon>
        <taxon>Bovidae</taxon>
        <taxon>Bovinae</taxon>
        <taxon>Bos</taxon>
    </lineage>
</organism>
<evidence type="ECO:0000250" key="1">
    <source>
        <dbReference type="UniProtKB" id="Q99JH7"/>
    </source>
</evidence>
<evidence type="ECO:0000250" key="2">
    <source>
        <dbReference type="UniProtKB" id="Q9BQT9"/>
    </source>
</evidence>
<evidence type="ECO:0000250" key="3">
    <source>
        <dbReference type="UniProtKB" id="Q9EPL2"/>
    </source>
</evidence>
<evidence type="ECO:0000255" key="4"/>
<evidence type="ECO:0000255" key="5">
    <source>
        <dbReference type="PROSITE-ProRule" id="PRU00043"/>
    </source>
</evidence>
<evidence type="ECO:0000256" key="6">
    <source>
        <dbReference type="SAM" id="MobiDB-lite"/>
    </source>
</evidence>
<evidence type="ECO:0000303" key="7">
    <source ref="1"/>
</evidence>
<evidence type="ECO:0000305" key="8"/>
<sequence>MTPLLFPLLLASLLPSSSCNKANKHKPWIEAEYQGIVMENDNTVLLNPPLFALDKDAPLRYAGEICGFRLHGSGVPFEAVILDKATGEGLIRAKEPVDCEAQKEHTFTIQAYDCGEGPDGANTKKSHKATVHVRVNDVNEFAPVFVERLYRAAVTEGKLYDRILRVEAIDGDCSPQYSQICYYEILTPNTPFLIDNDGNIENTEKLQYSGEKLYKFTVTAYDCGKKRAADDAEVEIQVKPTCKPSWQGWNKRIEYAPGAGSLALFPGIRLETCDEPLWNIQATIELQTSHVAKGCDRDNYSERALRKLCGAAPGEVDLLPMPGPNANWTAGLSVHYSQDSSLIYWFNGTQAVQVPLGGAAGLGSGPPDSLSDHFTLSFWMKHGVTPNKGKKEEETIVCNTVQNEDGFSHYSLTVHGCRIAFLYWPLLESARPVKFLWKLEQVCDDEWHHYALNLEFPTVTLYADGISFDPALIHDNGLIHPPRREPALMIGACWAEEKNKEKEKGGDNSTDATAGDPLPIHHYFHGYLAGFSVRSGRLESREVIECLYACREGLDYRDFESLGKGMKVHVNPSQSLLTLEGDDVETFNHALQHVAYMNTLRFATPGVRPLRLTTAVKCFSEESCVSIPEVEGYVVVLQPDAPQILLSGTAHFARPAVDFEGPEGVPLFPDLQITCSISHQVEAKKDESWQGTVTDTRMSDEIVHNLDGCEISLVGDDLDPERESLLLDMASLQQRGLELTNTSAYLTIAGVESITVYEEILRQARYRLRHGAALYARKFRLSCSEMNGRYSSNEFIVEVSVLHSVNRVAHPSHMLSSQQFLHRGHQPPPEMAGHSLASSHRNSMVPSAATLIIVVCVGFLVLMVVLGLVRIHSLHRRVSGASGPPGASSDPKDPDLFWDDSALTIIVNPMESYQSRQVCVAGAAGGQQDDEDSSDSEAADSPSSDERRIIETPPHRY</sequence>
<keyword id="KW-0025">Alternative splicing</keyword>
<keyword id="KW-0106">Calcium</keyword>
<keyword id="KW-0130">Cell adhesion</keyword>
<keyword id="KW-1003">Cell membrane</keyword>
<keyword id="KW-0966">Cell projection</keyword>
<keyword id="KW-0256">Endoplasmic reticulum</keyword>
<keyword id="KW-0325">Glycoprotein</keyword>
<keyword id="KW-0333">Golgi apparatus</keyword>
<keyword id="KW-0472">Membrane</keyword>
<keyword id="KW-0628">Postsynaptic cell membrane</keyword>
<keyword id="KW-1185">Reference proteome</keyword>
<keyword id="KW-0677">Repeat</keyword>
<keyword id="KW-0732">Signal</keyword>
<keyword id="KW-0770">Synapse</keyword>
<keyword id="KW-0812">Transmembrane</keyword>
<keyword id="KW-1133">Transmembrane helix</keyword>
<name>CSTN3_BOVIN</name>
<feature type="signal peptide" evidence="4">
    <location>
        <begin position="1"/>
        <end position="19"/>
    </location>
</feature>
<feature type="chain" id="PRO_0000323604" description="Calsyntenin-3">
    <location>
        <begin position="20"/>
        <end position="957"/>
    </location>
</feature>
<feature type="topological domain" description="Extracellular" evidence="4">
    <location>
        <begin position="20"/>
        <end position="848"/>
    </location>
</feature>
<feature type="transmembrane region" description="Helical" evidence="4">
    <location>
        <begin position="849"/>
        <end position="869"/>
    </location>
</feature>
<feature type="topological domain" description="Cytoplasmic" evidence="4">
    <location>
        <begin position="870"/>
        <end position="957"/>
    </location>
</feature>
<feature type="domain" description="Cadherin 1" evidence="5">
    <location>
        <begin position="29"/>
        <end position="145"/>
    </location>
</feature>
<feature type="domain" description="Cadherin 2" evidence="5">
    <location>
        <begin position="146"/>
        <end position="246"/>
    </location>
</feature>
<feature type="region of interest" description="Disordered" evidence="6">
    <location>
        <begin position="919"/>
        <end position="957"/>
    </location>
</feature>
<feature type="compositionally biased region" description="Acidic residues" evidence="6">
    <location>
        <begin position="928"/>
        <end position="938"/>
    </location>
</feature>
<feature type="compositionally biased region" description="Basic and acidic residues" evidence="6">
    <location>
        <begin position="944"/>
        <end position="957"/>
    </location>
</feature>
<feature type="glycosylation site" description="N-linked (GlcNAc...) asparagine" evidence="4">
    <location>
        <position position="299"/>
    </location>
</feature>
<feature type="glycosylation site" description="N-linked (GlcNAc...) asparagine" evidence="4">
    <location>
        <position position="347"/>
    </location>
</feature>
<feature type="glycosylation site" description="N-linked (GlcNAc...) asparagine" evidence="4">
    <location>
        <position position="508"/>
    </location>
</feature>
<feature type="splice variant" id="VSP_032038" description="In isoform 2." evidence="7">
    <original>VSVLHSVNRVAHPSHMLSSQQFLHRGHQPPPEMAGHSLASSHRNSMVPSAATLIIVVCVGFLV</original>
    <variation>WFPVRRPSSSWCAWASWCSWSSWVSCAFTHCTAASRGPVGLPGPPATPRIPISSGMTQLSPLS</variation>
    <location>
        <begin position="799"/>
        <end position="861"/>
    </location>
</feature>
<feature type="splice variant" id="VSP_032039" description="In isoform 2." evidence="7">
    <location>
        <begin position="862"/>
        <end position="957"/>
    </location>
</feature>
<dbReference type="EMBL" id="BC120082">
    <property type="protein sequence ID" value="AAI20083.1"/>
    <property type="molecule type" value="mRNA"/>
</dbReference>
<dbReference type="EMBL" id="DV883017">
    <property type="status" value="NOT_ANNOTATED_CDS"/>
    <property type="molecule type" value="mRNA"/>
</dbReference>
<dbReference type="EMBL" id="BT026553">
    <property type="protein sequence ID" value="ABH06340.1"/>
    <property type="molecule type" value="mRNA"/>
</dbReference>
<dbReference type="RefSeq" id="NP_001068893.2">
    <molecule id="Q0VCN6-1"/>
    <property type="nucleotide sequence ID" value="NM_001075425.2"/>
</dbReference>
<dbReference type="SMR" id="Q0VCN6"/>
<dbReference type="FunCoup" id="Q0VCN6">
    <property type="interactions" value="1145"/>
</dbReference>
<dbReference type="STRING" id="9913.ENSBTAP00000010687"/>
<dbReference type="GlyCosmos" id="Q0VCN6">
    <property type="glycosylation" value="3 sites, No reported glycans"/>
</dbReference>
<dbReference type="GlyGen" id="Q0VCN6">
    <property type="glycosylation" value="3 sites"/>
</dbReference>
<dbReference type="PaxDb" id="9913-ENSBTAP00000010687"/>
<dbReference type="Ensembl" id="ENSBTAT00000010689.5">
    <molecule id="Q0VCN6-2"/>
    <property type="protein sequence ID" value="ENSBTAP00000010689.4"/>
    <property type="gene ID" value="ENSBTAG00000008129.7"/>
</dbReference>
<dbReference type="GeneID" id="509969"/>
<dbReference type="KEGG" id="bta:509969"/>
<dbReference type="CTD" id="9746"/>
<dbReference type="VEuPathDB" id="HostDB:ENSBTAG00000008129"/>
<dbReference type="eggNOG" id="KOG1834">
    <property type="taxonomic scope" value="Eukaryota"/>
</dbReference>
<dbReference type="GeneTree" id="ENSGT00950000183086"/>
<dbReference type="HOGENOM" id="CLU_008904_0_0_1"/>
<dbReference type="InParanoid" id="Q0VCN6"/>
<dbReference type="OrthoDB" id="10012272at2759"/>
<dbReference type="TreeFam" id="TF315946"/>
<dbReference type="Proteomes" id="UP000009136">
    <property type="component" value="Chromosome 5"/>
</dbReference>
<dbReference type="Bgee" id="ENSBTAG00000008129">
    <property type="expression patterns" value="Expressed in prefrontal cortex and 92 other cell types or tissues"/>
</dbReference>
<dbReference type="GO" id="GO:0009986">
    <property type="term" value="C:cell surface"/>
    <property type="evidence" value="ECO:0000318"/>
    <property type="project" value="GO_Central"/>
</dbReference>
<dbReference type="GO" id="GO:0030425">
    <property type="term" value="C:dendrite"/>
    <property type="evidence" value="ECO:0007669"/>
    <property type="project" value="UniProtKB-SubCell"/>
</dbReference>
<dbReference type="GO" id="GO:0005789">
    <property type="term" value="C:endoplasmic reticulum membrane"/>
    <property type="evidence" value="ECO:0007669"/>
    <property type="project" value="UniProtKB-SubCell"/>
</dbReference>
<dbReference type="GO" id="GO:0000139">
    <property type="term" value="C:Golgi membrane"/>
    <property type="evidence" value="ECO:0007669"/>
    <property type="project" value="UniProtKB-SubCell"/>
</dbReference>
<dbReference type="GO" id="GO:0045211">
    <property type="term" value="C:postsynaptic membrane"/>
    <property type="evidence" value="ECO:0000250"/>
    <property type="project" value="AgBase"/>
</dbReference>
<dbReference type="GO" id="GO:0005509">
    <property type="term" value="F:calcium ion binding"/>
    <property type="evidence" value="ECO:0007669"/>
    <property type="project" value="InterPro"/>
</dbReference>
<dbReference type="GO" id="GO:0098632">
    <property type="term" value="F:cell-cell adhesion mediator activity"/>
    <property type="evidence" value="ECO:0000250"/>
    <property type="project" value="UniProtKB"/>
</dbReference>
<dbReference type="GO" id="GO:0042043">
    <property type="term" value="F:neurexin family protein binding"/>
    <property type="evidence" value="ECO:0000250"/>
    <property type="project" value="UniProtKB"/>
</dbReference>
<dbReference type="GO" id="GO:1904861">
    <property type="term" value="P:excitatory synapse assembly"/>
    <property type="evidence" value="ECO:0000250"/>
    <property type="project" value="UniProtKB"/>
</dbReference>
<dbReference type="GO" id="GO:0007156">
    <property type="term" value="P:homophilic cell adhesion via plasma membrane adhesion molecules"/>
    <property type="evidence" value="ECO:0007669"/>
    <property type="project" value="InterPro"/>
</dbReference>
<dbReference type="GO" id="GO:1904862">
    <property type="term" value="P:inhibitory synapse assembly"/>
    <property type="evidence" value="ECO:0000250"/>
    <property type="project" value="UniProtKB"/>
</dbReference>
<dbReference type="GO" id="GO:1904890">
    <property type="term" value="P:negative regulation of excitatory synapse assembly"/>
    <property type="evidence" value="ECO:0000250"/>
    <property type="project" value="UniProtKB"/>
</dbReference>
<dbReference type="GO" id="GO:1905704">
    <property type="term" value="P:positive regulation of inhibitory synapse assembly"/>
    <property type="evidence" value="ECO:0000250"/>
    <property type="project" value="UniProtKB"/>
</dbReference>
<dbReference type="GO" id="GO:0051965">
    <property type="term" value="P:positive regulation of synapse assembly"/>
    <property type="evidence" value="ECO:0000318"/>
    <property type="project" value="GO_Central"/>
</dbReference>
<dbReference type="GO" id="GO:0050806">
    <property type="term" value="P:positive regulation of synaptic transmission"/>
    <property type="evidence" value="ECO:0000318"/>
    <property type="project" value="GO_Central"/>
</dbReference>
<dbReference type="GO" id="GO:1904889">
    <property type="term" value="P:regulation of excitatory synapse assembly"/>
    <property type="evidence" value="ECO:0000250"/>
    <property type="project" value="UniProtKB"/>
</dbReference>
<dbReference type="CDD" id="cd11304">
    <property type="entry name" value="Cadherin_repeat"/>
    <property type="match status" value="2"/>
</dbReference>
<dbReference type="FunFam" id="2.60.40.60:FF:000025">
    <property type="entry name" value="Calsyntenin 1"/>
    <property type="match status" value="1"/>
</dbReference>
<dbReference type="FunFam" id="2.60.120.200:FF:000069">
    <property type="entry name" value="Calsyntenin 3"/>
    <property type="match status" value="1"/>
</dbReference>
<dbReference type="FunFam" id="2.60.40.60:FF:000062">
    <property type="entry name" value="Calsyntenin 3"/>
    <property type="match status" value="1"/>
</dbReference>
<dbReference type="Gene3D" id="2.60.120.200">
    <property type="match status" value="1"/>
</dbReference>
<dbReference type="Gene3D" id="2.60.40.60">
    <property type="entry name" value="Cadherins"/>
    <property type="match status" value="2"/>
</dbReference>
<dbReference type="InterPro" id="IPR002126">
    <property type="entry name" value="Cadherin-like_dom"/>
</dbReference>
<dbReference type="InterPro" id="IPR015919">
    <property type="entry name" value="Cadherin-like_sf"/>
</dbReference>
<dbReference type="InterPro" id="IPR045588">
    <property type="entry name" value="CLSTN_C"/>
</dbReference>
<dbReference type="InterPro" id="IPR013320">
    <property type="entry name" value="ConA-like_dom_sf"/>
</dbReference>
<dbReference type="PANTHER" id="PTHR14139">
    <property type="entry name" value="CALSYNTENIN"/>
    <property type="match status" value="1"/>
</dbReference>
<dbReference type="PANTHER" id="PTHR14139:SF5">
    <property type="entry name" value="CALSYNTENIN-3"/>
    <property type="match status" value="1"/>
</dbReference>
<dbReference type="Pfam" id="PF19699">
    <property type="entry name" value="CLSTN_C"/>
    <property type="match status" value="1"/>
</dbReference>
<dbReference type="PRINTS" id="PR00205">
    <property type="entry name" value="CADHERIN"/>
</dbReference>
<dbReference type="SMART" id="SM00112">
    <property type="entry name" value="CA"/>
    <property type="match status" value="2"/>
</dbReference>
<dbReference type="SUPFAM" id="SSF49313">
    <property type="entry name" value="Cadherin-like"/>
    <property type="match status" value="2"/>
</dbReference>
<dbReference type="SUPFAM" id="SSF49899">
    <property type="entry name" value="Concanavalin A-like lectins/glucanases"/>
    <property type="match status" value="1"/>
</dbReference>
<dbReference type="PROSITE" id="PS50268">
    <property type="entry name" value="CADHERIN_2"/>
    <property type="match status" value="2"/>
</dbReference>
<reference key="1">
    <citation type="submission" date="2006-08" db="EMBL/GenBank/DDBJ databases">
        <authorList>
            <consortium name="NIH - Mammalian Gene Collection (MGC) project"/>
        </authorList>
    </citation>
    <scope>NUCLEOTIDE SEQUENCE [LARGE SCALE MRNA] (ISOFORM 2)</scope>
    <scope>NUCLEOTIDE SEQUENCE [LARGE SCALE MRNA] OF 652-957 (ISOFORM 1)</scope>
    <source>
        <strain>Hereford</strain>
        <tissue>Fetal cerebellum</tissue>
        <tissue>Thalamus</tissue>
    </source>
</reference>
<reference key="2">
    <citation type="journal article" date="2005" name="BMC Genomics">
        <title>Characterization of 954 bovine full-CDS cDNA sequences.</title>
        <authorList>
            <person name="Harhay G.P."/>
            <person name="Sonstegard T.S."/>
            <person name="Keele J.W."/>
            <person name="Heaton M.P."/>
            <person name="Clawson M.L."/>
            <person name="Snelling W.M."/>
            <person name="Wiedmann R.T."/>
            <person name="Van Tassell C.P."/>
            <person name="Smith T.P.L."/>
        </authorList>
    </citation>
    <scope>NUCLEOTIDE SEQUENCE [LARGE SCALE MRNA] OF 1-499 (ISOFORM 1/2)</scope>
</reference>
<comment type="function">
    <text evidence="1 2">Postsynaptic adhesion molecule that binds to presynaptic neurexins to mediate both excitatory and inhibitory synapse formation. Promotes synapse development by acting as a cell adhesion molecule at the postsynaptic membrane, which associates with both neurexin-alpha and neurexin-beta proteins at the presynaptic membrane (By similarity). Regulates the balance between excitatory and inhibitory synapses by inhibiting formation of excitatory parallel-fiber synapses and promoting formation of inhibitory synapses in the same neuron (By similarity). May also be involved in ascorbate (vitamin C) uptake via its interaction with SLC23A2/SVCT2. Complex formation with APBA2 and APP, stabilizes APP metabolism and enhances APBA2-mediated suppression of beta-APP40 secretion, due to the retardation of intracellular APP maturation (By similarity).</text>
</comment>
<comment type="subunit">
    <text evidence="1 2">Interacts (via cadherin domains) with both alpha and beta isoforms of neurexins (NRXN1, NRXN2 and NRXN3) (By similarity). Directly interacts with APBA2. Forms a tripartite complex with APBA2 and APP (By similarity). Interacts with low affinity with KLC1 (By similarity). Interacts with SLC23A2/SVCT2 (By similarity).</text>
</comment>
<comment type="subcellular location">
    <subcellularLocation>
        <location evidence="1">Postsynaptic cell membrane</location>
        <topology evidence="4">Single-pass type I membrane protein</topology>
    </subcellularLocation>
    <subcellularLocation>
        <location evidence="1">Endoplasmic reticulum membrane</location>
        <topology evidence="4">Single-pass type I membrane protein</topology>
    </subcellularLocation>
    <subcellularLocation>
        <location evidence="1">Golgi apparatus membrane</location>
        <topology evidence="4">Single-pass type I membrane protein</topology>
    </subcellularLocation>
    <subcellularLocation>
        <location evidence="1">Cell projection</location>
        <location evidence="1">Dendrite</location>
    </subcellularLocation>
    <text evidence="1">Most prominent in the postsynaptic specializations of asymmetric (type I) synapses with both axodendritic and axospinous localization.</text>
</comment>
<comment type="alternative products">
    <event type="alternative splicing"/>
    <isoform>
        <id>Q0VCN6-1</id>
        <name>1</name>
        <sequence type="displayed"/>
    </isoform>
    <isoform>
        <id>Q0VCN6-2</id>
        <name>2</name>
        <sequence type="described" ref="VSP_032038 VSP_032039"/>
    </isoform>
</comment>
<comment type="domain">
    <text evidence="3">The cytoplasmic domain binds synaptic Ca(2+).</text>
</comment>
<comment type="PTM">
    <text evidence="2">Proteolytically processed under normal cellular conditions. A primary zeta-cleavage generates a large extracellular (soluble) N-terminal domain (sAlc) and a short C-terminal transmembrane fragment (CTF1). A secondary cleavage catalyzed by gamma-secretase within the transmembrane domain releases the beta-Alc-beta chain in the extracellular milieu and produces an intracellular fragment (AlcICD). This processing is strongly suppressed in the tripartite complex formed with APBA2 and APP, which seems to prevent the association with gamma-secretase.</text>
</comment>
<comment type="similarity">
    <text evidence="8">Belongs to the calsyntenin family.</text>
</comment>
<protein>
    <recommendedName>
        <fullName>Calsyntenin-3</fullName>
    </recommendedName>
</protein>
<accession>Q0VCN6</accession>
<accession>Q0V7L7</accession>
<gene>
    <name type="primary">CLSTN3</name>
</gene>